<evidence type="ECO:0000250" key="1"/>
<evidence type="ECO:0000255" key="2">
    <source>
        <dbReference type="PROSITE-ProRule" id="PRU01133"/>
    </source>
</evidence>
<dbReference type="EMBL" id="CR382137">
    <property type="protein sequence ID" value="CAG88319.1"/>
    <property type="molecule type" value="Genomic_DNA"/>
</dbReference>
<dbReference type="RefSeq" id="XP_460061.1">
    <property type="nucleotide sequence ID" value="XM_460061.1"/>
</dbReference>
<dbReference type="SMR" id="Q6BP09"/>
<dbReference type="FunCoup" id="Q6BP09">
    <property type="interactions" value="910"/>
</dbReference>
<dbReference type="STRING" id="284592.Q6BP09"/>
<dbReference type="GeneID" id="2902250"/>
<dbReference type="KEGG" id="dha:DEHA2E17468g"/>
<dbReference type="VEuPathDB" id="FungiDB:DEHA2E17468g"/>
<dbReference type="eggNOG" id="KOG1727">
    <property type="taxonomic scope" value="Eukaryota"/>
</dbReference>
<dbReference type="HOGENOM" id="CLU_095877_0_0_1"/>
<dbReference type="InParanoid" id="Q6BP09"/>
<dbReference type="OMA" id="AYNKCIK"/>
<dbReference type="OrthoDB" id="10248936at2759"/>
<dbReference type="Proteomes" id="UP000000599">
    <property type="component" value="Chromosome E"/>
</dbReference>
<dbReference type="GO" id="GO:0005829">
    <property type="term" value="C:cytosol"/>
    <property type="evidence" value="ECO:0007669"/>
    <property type="project" value="EnsemblFungi"/>
</dbReference>
<dbReference type="GO" id="GO:0005874">
    <property type="term" value="C:microtubule"/>
    <property type="evidence" value="ECO:0007669"/>
    <property type="project" value="UniProtKB-KW"/>
</dbReference>
<dbReference type="GO" id="GO:0005739">
    <property type="term" value="C:mitochondrion"/>
    <property type="evidence" value="ECO:0007669"/>
    <property type="project" value="EnsemblFungi"/>
</dbReference>
<dbReference type="GO" id="GO:0005509">
    <property type="term" value="F:calcium ion binding"/>
    <property type="evidence" value="ECO:0007669"/>
    <property type="project" value="TreeGrafter"/>
</dbReference>
<dbReference type="GO" id="GO:0002181">
    <property type="term" value="P:cytoplasmic translation"/>
    <property type="evidence" value="ECO:0007669"/>
    <property type="project" value="EnsemblFungi"/>
</dbReference>
<dbReference type="GO" id="GO:0010507">
    <property type="term" value="P:negative regulation of autophagy"/>
    <property type="evidence" value="ECO:0007669"/>
    <property type="project" value="EnsemblFungi"/>
</dbReference>
<dbReference type="GO" id="GO:0007026">
    <property type="term" value="P:negative regulation of microtubule depolymerization"/>
    <property type="evidence" value="ECO:0007669"/>
    <property type="project" value="EnsemblFungi"/>
</dbReference>
<dbReference type="FunFam" id="2.170.150.10:FF:000002">
    <property type="entry name" value="Translationally-controlled tumor protein homolog"/>
    <property type="match status" value="1"/>
</dbReference>
<dbReference type="Gene3D" id="2.170.150.10">
    <property type="entry name" value="Metal Binding Protein, Guanine Nucleotide Exchange Factor, Chain A"/>
    <property type="match status" value="1"/>
</dbReference>
<dbReference type="InterPro" id="IPR011057">
    <property type="entry name" value="Mss4-like_sf"/>
</dbReference>
<dbReference type="InterPro" id="IPR011323">
    <property type="entry name" value="Mss4/transl-control_tumour"/>
</dbReference>
<dbReference type="InterPro" id="IPR034737">
    <property type="entry name" value="TCTP"/>
</dbReference>
<dbReference type="InterPro" id="IPR018103">
    <property type="entry name" value="Translation_control_tumour_CS"/>
</dbReference>
<dbReference type="InterPro" id="IPR018105">
    <property type="entry name" value="Translational_control_tumour_p"/>
</dbReference>
<dbReference type="PANTHER" id="PTHR11991">
    <property type="entry name" value="TRANSLATIONALLY CONTROLLED TUMOR PROTEIN-RELATED"/>
    <property type="match status" value="1"/>
</dbReference>
<dbReference type="PANTHER" id="PTHR11991:SF0">
    <property type="entry name" value="TRANSLATIONALLY-CONTROLLED TUMOR PROTEIN"/>
    <property type="match status" value="1"/>
</dbReference>
<dbReference type="Pfam" id="PF00838">
    <property type="entry name" value="TCTP"/>
    <property type="match status" value="1"/>
</dbReference>
<dbReference type="PRINTS" id="PR01653">
    <property type="entry name" value="TCTPROTEIN"/>
</dbReference>
<dbReference type="SUPFAM" id="SSF51316">
    <property type="entry name" value="Mss4-like"/>
    <property type="match status" value="1"/>
</dbReference>
<dbReference type="PROSITE" id="PS01002">
    <property type="entry name" value="TCTP_1"/>
    <property type="match status" value="1"/>
</dbReference>
<dbReference type="PROSITE" id="PS01003">
    <property type="entry name" value="TCTP_2"/>
    <property type="match status" value="1"/>
</dbReference>
<dbReference type="PROSITE" id="PS51797">
    <property type="entry name" value="TCTP_3"/>
    <property type="match status" value="1"/>
</dbReference>
<sequence length="167" mass="18676">MIIFTDVISGDELLSDAYDVKLVDDVVYEADCAMVNVNNGDVDIGANPSAEEGGEDLEDGTETVNNVVYSFRLQQTSFDKKSFMTYMKGYMKRVKAHLAEKNPEAIEAFENGAKTYFKKVVSSFGDWDFYTGESMDPDGMVVLLNYREDGTTPYVAIWKHGVSEDKI</sequence>
<accession>Q6BP09</accession>
<comment type="function">
    <text evidence="1">Involved in protein synthesis. Involved in microtubule stabilization (By similarity).</text>
</comment>
<comment type="subcellular location">
    <subcellularLocation>
        <location evidence="1">Cytoplasm</location>
        <location evidence="1">Cytoskeleton</location>
    </subcellularLocation>
</comment>
<comment type="similarity">
    <text evidence="2">Belongs to the TCTP family.</text>
</comment>
<gene>
    <name type="ordered locus">DEHA2E17468g</name>
</gene>
<feature type="chain" id="PRO_0000252322" description="Translationally-controlled tumor protein homolog">
    <location>
        <begin position="1"/>
        <end position="167"/>
    </location>
</feature>
<feature type="domain" description="TCTP" evidence="2">
    <location>
        <begin position="1"/>
        <end position="167"/>
    </location>
</feature>
<proteinExistence type="inferred from homology"/>
<reference key="1">
    <citation type="journal article" date="2004" name="Nature">
        <title>Genome evolution in yeasts.</title>
        <authorList>
            <person name="Dujon B."/>
            <person name="Sherman D."/>
            <person name="Fischer G."/>
            <person name="Durrens P."/>
            <person name="Casaregola S."/>
            <person name="Lafontaine I."/>
            <person name="de Montigny J."/>
            <person name="Marck C."/>
            <person name="Neuveglise C."/>
            <person name="Talla E."/>
            <person name="Goffard N."/>
            <person name="Frangeul L."/>
            <person name="Aigle M."/>
            <person name="Anthouard V."/>
            <person name="Babour A."/>
            <person name="Barbe V."/>
            <person name="Barnay S."/>
            <person name="Blanchin S."/>
            <person name="Beckerich J.-M."/>
            <person name="Beyne E."/>
            <person name="Bleykasten C."/>
            <person name="Boisrame A."/>
            <person name="Boyer J."/>
            <person name="Cattolico L."/>
            <person name="Confanioleri F."/>
            <person name="de Daruvar A."/>
            <person name="Despons L."/>
            <person name="Fabre E."/>
            <person name="Fairhead C."/>
            <person name="Ferry-Dumazet H."/>
            <person name="Groppi A."/>
            <person name="Hantraye F."/>
            <person name="Hennequin C."/>
            <person name="Jauniaux N."/>
            <person name="Joyet P."/>
            <person name="Kachouri R."/>
            <person name="Kerrest A."/>
            <person name="Koszul R."/>
            <person name="Lemaire M."/>
            <person name="Lesur I."/>
            <person name="Ma L."/>
            <person name="Muller H."/>
            <person name="Nicaud J.-M."/>
            <person name="Nikolski M."/>
            <person name="Oztas S."/>
            <person name="Ozier-Kalogeropoulos O."/>
            <person name="Pellenz S."/>
            <person name="Potier S."/>
            <person name="Richard G.-F."/>
            <person name="Straub M.-L."/>
            <person name="Suleau A."/>
            <person name="Swennen D."/>
            <person name="Tekaia F."/>
            <person name="Wesolowski-Louvel M."/>
            <person name="Westhof E."/>
            <person name="Wirth B."/>
            <person name="Zeniou-Meyer M."/>
            <person name="Zivanovic Y."/>
            <person name="Bolotin-Fukuhara M."/>
            <person name="Thierry A."/>
            <person name="Bouchier C."/>
            <person name="Caudron B."/>
            <person name="Scarpelli C."/>
            <person name="Gaillardin C."/>
            <person name="Weissenbach J."/>
            <person name="Wincker P."/>
            <person name="Souciet J.-L."/>
        </authorList>
    </citation>
    <scope>NUCLEOTIDE SEQUENCE [LARGE SCALE GENOMIC DNA]</scope>
    <source>
        <strain>ATCC 36239 / CBS 767 / BCRC 21394 / JCM 1990 / NBRC 0083 / IGC 2968</strain>
    </source>
</reference>
<organism>
    <name type="scientific">Debaryomyces hansenii (strain ATCC 36239 / CBS 767 / BCRC 21394 / JCM 1990 / NBRC 0083 / IGC 2968)</name>
    <name type="common">Yeast</name>
    <name type="synonym">Torulaspora hansenii</name>
    <dbReference type="NCBI Taxonomy" id="284592"/>
    <lineage>
        <taxon>Eukaryota</taxon>
        <taxon>Fungi</taxon>
        <taxon>Dikarya</taxon>
        <taxon>Ascomycota</taxon>
        <taxon>Saccharomycotina</taxon>
        <taxon>Pichiomycetes</taxon>
        <taxon>Debaryomycetaceae</taxon>
        <taxon>Debaryomyces</taxon>
    </lineage>
</organism>
<protein>
    <recommendedName>
        <fullName>Translationally-controlled tumor protein homolog</fullName>
        <shortName>TCTP</shortName>
    </recommendedName>
</protein>
<keyword id="KW-0963">Cytoplasm</keyword>
<keyword id="KW-0206">Cytoskeleton</keyword>
<keyword id="KW-0493">Microtubule</keyword>
<keyword id="KW-0648">Protein biosynthesis</keyword>
<keyword id="KW-1185">Reference proteome</keyword>
<name>TCTP_DEBHA</name>